<reference key="1">
    <citation type="journal article" date="2004" name="Science">
        <title>A predator unmasked: life cycle of Bdellovibrio bacteriovorus from a genomic perspective.</title>
        <authorList>
            <person name="Rendulic S."/>
            <person name="Jagtap P."/>
            <person name="Rosinus A."/>
            <person name="Eppinger M."/>
            <person name="Baar C."/>
            <person name="Lanz C."/>
            <person name="Keller H."/>
            <person name="Lambert C."/>
            <person name="Evans K.J."/>
            <person name="Goesmann A."/>
            <person name="Meyer F."/>
            <person name="Sockett R.E."/>
            <person name="Schuster S.C."/>
        </authorList>
    </citation>
    <scope>NUCLEOTIDE SEQUENCE [LARGE SCALE GENOMIC DNA]</scope>
    <source>
        <strain>ATCC 15356 / DSM 50701 / NCIMB 9529 / HD100</strain>
    </source>
</reference>
<organism>
    <name type="scientific">Bdellovibrio bacteriovorus (strain ATCC 15356 / DSM 50701 / NCIMB 9529 / HD100)</name>
    <dbReference type="NCBI Taxonomy" id="264462"/>
    <lineage>
        <taxon>Bacteria</taxon>
        <taxon>Pseudomonadati</taxon>
        <taxon>Bdellovibrionota</taxon>
        <taxon>Bdellovibrionia</taxon>
        <taxon>Bdellovibrionales</taxon>
        <taxon>Pseudobdellovibrionaceae</taxon>
        <taxon>Bdellovibrio</taxon>
    </lineage>
</organism>
<sequence>MPQKQLILASTSKYRQELLSRLAYSYSAQAPLVDEEKEKDPSLAPQALAEKLADLKAASLKAADKVVIGGDQLVSFEGRIIGKAHTPERAIEQLMSMQGKTHDLITAICVYDGDKKIAYTDITRMHMKKMTRAQIERYVQLDNPIDCAGSYKIEKHGIMLFDKIESQDFTAIQGLPLIELGKILENANL</sequence>
<comment type="function">
    <text evidence="1">Nucleoside triphosphate pyrophosphatase that hydrolyzes 7-methyl-GTP (m(7)GTP). May have a dual role in cell division arrest and in preventing the incorporation of modified nucleotides into cellular nucleic acids.</text>
</comment>
<comment type="catalytic activity">
    <reaction evidence="1">
        <text>N(7)-methyl-GTP + H2O = N(7)-methyl-GMP + diphosphate + H(+)</text>
        <dbReference type="Rhea" id="RHEA:58744"/>
        <dbReference type="ChEBI" id="CHEBI:15377"/>
        <dbReference type="ChEBI" id="CHEBI:15378"/>
        <dbReference type="ChEBI" id="CHEBI:33019"/>
        <dbReference type="ChEBI" id="CHEBI:58285"/>
        <dbReference type="ChEBI" id="CHEBI:87133"/>
    </reaction>
</comment>
<comment type="cofactor">
    <cofactor evidence="1">
        <name>a divalent metal cation</name>
        <dbReference type="ChEBI" id="CHEBI:60240"/>
    </cofactor>
</comment>
<comment type="subcellular location">
    <subcellularLocation>
        <location evidence="1">Cytoplasm</location>
    </subcellularLocation>
</comment>
<comment type="similarity">
    <text evidence="1">Belongs to the Maf family. YceF subfamily.</text>
</comment>
<name>NTPPB_BDEBA</name>
<accession>Q6MKE8</accession>
<protein>
    <recommendedName>
        <fullName evidence="1">7-methyl-GTP pyrophosphatase</fullName>
        <shortName evidence="1">m(7)GTP pyrophosphatase</shortName>
        <ecNumber evidence="1">3.6.1.-</ecNumber>
    </recommendedName>
</protein>
<gene>
    <name type="ordered locus">Bd2448</name>
</gene>
<feature type="chain" id="PRO_0000267255" description="7-methyl-GTP pyrophosphatase">
    <location>
        <begin position="1"/>
        <end position="189"/>
    </location>
</feature>
<feature type="active site" description="Proton acceptor" evidence="1">
    <location>
        <position position="71"/>
    </location>
</feature>
<feature type="site" description="Important for substrate specificity" evidence="1">
    <location>
        <position position="14"/>
    </location>
</feature>
<feature type="site" description="Important for substrate specificity" evidence="1">
    <location>
        <position position="72"/>
    </location>
</feature>
<feature type="site" description="Important for substrate specificity" evidence="1">
    <location>
        <position position="154"/>
    </location>
</feature>
<keyword id="KW-0963">Cytoplasm</keyword>
<keyword id="KW-0378">Hydrolase</keyword>
<keyword id="KW-0546">Nucleotide metabolism</keyword>
<keyword id="KW-1185">Reference proteome</keyword>
<dbReference type="EC" id="3.6.1.-" evidence="1"/>
<dbReference type="EMBL" id="BX842652">
    <property type="protein sequence ID" value="CAE80259.1"/>
    <property type="molecule type" value="Genomic_DNA"/>
</dbReference>
<dbReference type="RefSeq" id="WP_011164862.1">
    <property type="nucleotide sequence ID" value="NC_005363.1"/>
</dbReference>
<dbReference type="SMR" id="Q6MKE8"/>
<dbReference type="STRING" id="264462.Bd2448"/>
<dbReference type="GeneID" id="93013362"/>
<dbReference type="KEGG" id="bba:Bd2448"/>
<dbReference type="eggNOG" id="COG0424">
    <property type="taxonomic scope" value="Bacteria"/>
</dbReference>
<dbReference type="HOGENOM" id="CLU_040416_2_1_7"/>
<dbReference type="Proteomes" id="UP000008080">
    <property type="component" value="Chromosome"/>
</dbReference>
<dbReference type="GO" id="GO:0005737">
    <property type="term" value="C:cytoplasm"/>
    <property type="evidence" value="ECO:0007669"/>
    <property type="project" value="UniProtKB-SubCell"/>
</dbReference>
<dbReference type="GO" id="GO:0047429">
    <property type="term" value="F:nucleoside triphosphate diphosphatase activity"/>
    <property type="evidence" value="ECO:0007669"/>
    <property type="project" value="InterPro"/>
</dbReference>
<dbReference type="GO" id="GO:0009117">
    <property type="term" value="P:nucleotide metabolic process"/>
    <property type="evidence" value="ECO:0007669"/>
    <property type="project" value="UniProtKB-KW"/>
</dbReference>
<dbReference type="CDD" id="cd00555">
    <property type="entry name" value="Maf"/>
    <property type="match status" value="1"/>
</dbReference>
<dbReference type="Gene3D" id="3.90.950.10">
    <property type="match status" value="1"/>
</dbReference>
<dbReference type="HAMAP" id="MF_00528">
    <property type="entry name" value="Maf"/>
    <property type="match status" value="1"/>
</dbReference>
<dbReference type="InterPro" id="IPR029001">
    <property type="entry name" value="ITPase-like_fam"/>
</dbReference>
<dbReference type="InterPro" id="IPR003697">
    <property type="entry name" value="Maf-like"/>
</dbReference>
<dbReference type="NCBIfam" id="TIGR00172">
    <property type="entry name" value="maf"/>
    <property type="match status" value="1"/>
</dbReference>
<dbReference type="PANTHER" id="PTHR43213:SF10">
    <property type="entry name" value="7-METHYL-GTP PYROPHOSPHATASE"/>
    <property type="match status" value="1"/>
</dbReference>
<dbReference type="PANTHER" id="PTHR43213">
    <property type="entry name" value="BIFUNCTIONAL DTTP/UTP PYROPHOSPHATASE/METHYLTRANSFERASE PROTEIN-RELATED"/>
    <property type="match status" value="1"/>
</dbReference>
<dbReference type="Pfam" id="PF02545">
    <property type="entry name" value="Maf"/>
    <property type="match status" value="1"/>
</dbReference>
<dbReference type="PIRSF" id="PIRSF006305">
    <property type="entry name" value="Maf"/>
    <property type="match status" value="1"/>
</dbReference>
<dbReference type="SUPFAM" id="SSF52972">
    <property type="entry name" value="ITPase-like"/>
    <property type="match status" value="1"/>
</dbReference>
<evidence type="ECO:0000255" key="1">
    <source>
        <dbReference type="HAMAP-Rule" id="MF_00528"/>
    </source>
</evidence>
<proteinExistence type="inferred from homology"/>